<feature type="chain" id="PRO_0000377548" description="Pro-interleukin-16">
    <location>
        <begin position="1"/>
        <end position="627"/>
    </location>
</feature>
<feature type="chain" id="PRO_0000015422" description="Interleukin-16" evidence="1">
    <location>
        <begin position="507"/>
        <end position="627"/>
    </location>
</feature>
<feature type="domain" description="PDZ 1" evidence="3">
    <location>
        <begin position="407"/>
        <end position="492"/>
    </location>
</feature>
<feature type="domain" description="PDZ 2" evidence="3">
    <location>
        <begin position="529"/>
        <end position="614"/>
    </location>
</feature>
<feature type="region of interest" description="Disordered" evidence="4">
    <location>
        <begin position="34"/>
        <end position="136"/>
    </location>
</feature>
<feature type="region of interest" description="Disordered" evidence="4">
    <location>
        <begin position="162"/>
        <end position="267"/>
    </location>
</feature>
<feature type="region of interest" description="Disordered" evidence="4">
    <location>
        <begin position="316"/>
        <end position="337"/>
    </location>
</feature>
<feature type="region of interest" description="Interaction with PPP1R12A, PPP1R12B and PPP1R12C" evidence="1">
    <location>
        <begin position="401"/>
        <end position="497"/>
    </location>
</feature>
<feature type="compositionally biased region" description="Polar residues" evidence="4">
    <location>
        <begin position="318"/>
        <end position="337"/>
    </location>
</feature>
<feature type="modified residue" description="Phosphoserine" evidence="2">
    <location>
        <position position="217"/>
    </location>
</feature>
<keyword id="KW-0145">Chemotaxis</keyword>
<keyword id="KW-0202">Cytokine</keyword>
<keyword id="KW-0963">Cytoplasm</keyword>
<keyword id="KW-0539">Nucleus</keyword>
<keyword id="KW-0597">Phosphoprotein</keyword>
<keyword id="KW-0677">Repeat</keyword>
<keyword id="KW-0964">Secreted</keyword>
<keyword id="KW-0804">Transcription</keyword>
<keyword id="KW-0805">Transcription regulation</keyword>
<accession>O62677</accession>
<evidence type="ECO:0000250" key="1"/>
<evidence type="ECO:0000250" key="2">
    <source>
        <dbReference type="UniProtKB" id="Q14005"/>
    </source>
</evidence>
<evidence type="ECO:0000255" key="3">
    <source>
        <dbReference type="PROSITE-ProRule" id="PRU00143"/>
    </source>
</evidence>
<evidence type="ECO:0000256" key="4">
    <source>
        <dbReference type="SAM" id="MobiDB-lite"/>
    </source>
</evidence>
<evidence type="ECO:0000305" key="5"/>
<comment type="function">
    <text evidence="1">Interleukin-16 stimulates a migratory response in CD4+ lymphocytes, monocytes, and eosinophils. Primes CD4+ T-cells for IL-2 and IL-15 responsiveness. Also induces T-lymphocyte expression of interleukin 2 receptor. Ligand for CD4 (By similarity).</text>
</comment>
<comment type="function">
    <text evidence="1">Pro-interleukin-16 is involved in cell cycle progression in T-cells. Appears to be involved in transcriptional regulation of SKP2 and is probably part of a transcriptional repression complex on the core promoter of the SKP2 gene. May act as a scaffold for GABPB1 (the DNA-binding subunit the GABP transcription factor complex) and HDAC3 thus maintaining transcriptional repression and blocking cell cycle progression in resting T-cells (By similarity).</text>
</comment>
<comment type="subunit">
    <text evidence="1 5">Homotetramer (Probable). Pro-interleukin-16 interacts (via PDZ 2 domain) with PPP1R12A, PPP1R12B and PPP1R12C. Pro-interleukin-16 interacts with GRIN2A. Pro-interleukin-16 interacts with GABPB1. Pro-interleukin-16 interacts (via PDZ 3 domain) with HDAC3 (By similarity).</text>
</comment>
<comment type="subcellular location">
    <molecule>Interleukin-16</molecule>
    <subcellularLocation>
        <location evidence="1">Secreted</location>
    </subcellularLocation>
</comment>
<comment type="subcellular location">
    <molecule>Pro-interleukin-16</molecule>
    <subcellularLocation>
        <location>Cytoplasm</location>
    </subcellularLocation>
    <subcellularLocation>
        <location evidence="1">Nucleus</location>
    </subcellularLocation>
</comment>
<reference key="1">
    <citation type="journal article" date="1998" name="Immunogenetics">
        <title>Molecular cloning and sequence analysis of interleukin 16 from nonhuman primates and from the mouse.</title>
        <authorList>
            <person name="Bannert N."/>
            <person name="Adler H.S."/>
            <person name="Werner A."/>
            <person name="Baier M."/>
            <person name="Kurth R."/>
        </authorList>
    </citation>
    <scope>NUCLEOTIDE SEQUENCE [MRNA]</scope>
</reference>
<gene>
    <name type="primary">IL16</name>
</gene>
<name>IL16_SAISC</name>
<dbReference type="EMBL" id="AF017109">
    <property type="protein sequence ID" value="AAC16037.1"/>
    <property type="molecule type" value="mRNA"/>
</dbReference>
<dbReference type="SMR" id="O62677"/>
<dbReference type="GO" id="GO:0005737">
    <property type="term" value="C:cytoplasm"/>
    <property type="evidence" value="ECO:0007669"/>
    <property type="project" value="UniProtKB-SubCell"/>
</dbReference>
<dbReference type="GO" id="GO:0005615">
    <property type="term" value="C:extracellular space"/>
    <property type="evidence" value="ECO:0007669"/>
    <property type="project" value="UniProtKB-KW"/>
</dbReference>
<dbReference type="GO" id="GO:0005634">
    <property type="term" value="C:nucleus"/>
    <property type="evidence" value="ECO:0007669"/>
    <property type="project" value="UniProtKB-SubCell"/>
</dbReference>
<dbReference type="GO" id="GO:0042609">
    <property type="term" value="F:CD4 receptor binding"/>
    <property type="evidence" value="ECO:0007669"/>
    <property type="project" value="TreeGrafter"/>
</dbReference>
<dbReference type="GO" id="GO:0005125">
    <property type="term" value="F:cytokine activity"/>
    <property type="evidence" value="ECO:0007669"/>
    <property type="project" value="UniProtKB-KW"/>
</dbReference>
<dbReference type="GO" id="GO:0050930">
    <property type="term" value="P:induction of positive chemotaxis"/>
    <property type="evidence" value="ECO:0007669"/>
    <property type="project" value="InterPro"/>
</dbReference>
<dbReference type="GO" id="GO:0030595">
    <property type="term" value="P:leukocyte chemotaxis"/>
    <property type="evidence" value="ECO:0007669"/>
    <property type="project" value="TreeGrafter"/>
</dbReference>
<dbReference type="CDD" id="cd06762">
    <property type="entry name" value="PDZ6_PDZD2-PDZ3_hPro-IL-16-like"/>
    <property type="match status" value="1"/>
</dbReference>
<dbReference type="CDD" id="cd06763">
    <property type="entry name" value="PDZ7_PDZD2-PDZ4_hPro-IL-16-like"/>
    <property type="match status" value="1"/>
</dbReference>
<dbReference type="FunFam" id="2.30.42.10:FF:000122">
    <property type="entry name" value="Pro-interleukin-16"/>
    <property type="match status" value="1"/>
</dbReference>
<dbReference type="FunFam" id="2.30.42.10:FF:000147">
    <property type="entry name" value="Pro-interleukin-16"/>
    <property type="match status" value="1"/>
</dbReference>
<dbReference type="Gene3D" id="2.30.42.10">
    <property type="match status" value="2"/>
</dbReference>
<dbReference type="InterPro" id="IPR020450">
    <property type="entry name" value="IL-16"/>
</dbReference>
<dbReference type="InterPro" id="IPR055287">
    <property type="entry name" value="IL-16-like"/>
</dbReference>
<dbReference type="InterPro" id="IPR001478">
    <property type="entry name" value="PDZ"/>
</dbReference>
<dbReference type="InterPro" id="IPR036034">
    <property type="entry name" value="PDZ_sf"/>
</dbReference>
<dbReference type="PANTHER" id="PTHR48484">
    <property type="entry name" value="PRO-INTERLEUKIN-16"/>
    <property type="match status" value="1"/>
</dbReference>
<dbReference type="PANTHER" id="PTHR48484:SF2">
    <property type="entry name" value="PRO-INTERLEUKIN-16"/>
    <property type="match status" value="1"/>
</dbReference>
<dbReference type="Pfam" id="PF00595">
    <property type="entry name" value="PDZ"/>
    <property type="match status" value="2"/>
</dbReference>
<dbReference type="PRINTS" id="PR01931">
    <property type="entry name" value="INTRLEUKIN16"/>
</dbReference>
<dbReference type="SMART" id="SM00228">
    <property type="entry name" value="PDZ"/>
    <property type="match status" value="2"/>
</dbReference>
<dbReference type="SUPFAM" id="SSF50156">
    <property type="entry name" value="PDZ domain-like"/>
    <property type="match status" value="2"/>
</dbReference>
<dbReference type="PROSITE" id="PS50106">
    <property type="entry name" value="PDZ"/>
    <property type="match status" value="2"/>
</dbReference>
<protein>
    <recommendedName>
        <fullName>Pro-interleukin-16</fullName>
    </recommendedName>
    <component>
        <recommendedName>
            <fullName>Interleukin-16</fullName>
            <shortName>IL-16</shortName>
        </recommendedName>
        <alternativeName>
            <fullName>Lymphocyte chemoattractant factor</fullName>
            <shortName>LCF</shortName>
        </alternativeName>
    </component>
</protein>
<sequence>MDYSFDTTAEDPWVRISDCIKNLFSPIMTENHSHMPLQPNVSLSEGDGTQGHPDGTPPKLETANGTPKVYRPADSSTVKKGPPVAPKPAWFRQSLKGLRNRASDPRRLPDPALSVQPVPASREHPGPHTQASSIKQRISSFETFGSSQRLDKGAQRLSLQLSSGEAAKPVGKHEGGRLPGLLGRGAVPTLAPQETEQVLPSGSPAASEATDPGVSESPPPGRQPSEKTLPPSPDPLLRLLPTQTEESQGPVLKMPSQRARSFPLTRSQSCETKLLDEKTSKLYSISSQVSSAVMKSLLCLPSSISWGQAPCIPKEGASPTSLSNEDSAANGCAETSGSDTGFSLNLSELREYTEGLTEAKEADDGDHSSPQSGQSVISLLSSEELKQLIEEVKDLDEATLKQLDSIHVTILHKEEGAGLGFSLAGGADLENKVITVHRVFPNGLASQEGTIQKGNEVLSINGKSLKGTTHNDALAILRQAREPRQAVIVTRKLTPETVPDLNSSTDSAASASAASDVSVDSTAEATVCTVTLEKMSGGLGFSLEGGKGSLQGDKPLTINRIFKGAASEQSETVQPGDEILHLAGTAMQGLTRFEAWNIIKALPDGPVTIVIKRKSMQSKGTSAAGDS</sequence>
<organism>
    <name type="scientific">Saimiri sciureus</name>
    <name type="common">Common squirrel monkey</name>
    <dbReference type="NCBI Taxonomy" id="9521"/>
    <lineage>
        <taxon>Eukaryota</taxon>
        <taxon>Metazoa</taxon>
        <taxon>Chordata</taxon>
        <taxon>Craniata</taxon>
        <taxon>Vertebrata</taxon>
        <taxon>Euteleostomi</taxon>
        <taxon>Mammalia</taxon>
        <taxon>Eutheria</taxon>
        <taxon>Euarchontoglires</taxon>
        <taxon>Primates</taxon>
        <taxon>Haplorrhini</taxon>
        <taxon>Platyrrhini</taxon>
        <taxon>Cebidae</taxon>
        <taxon>Saimiriinae</taxon>
        <taxon>Saimiri</taxon>
    </lineage>
</organism>
<proteinExistence type="evidence at transcript level"/>